<name>SFSA_MAGMM</name>
<sequence>MEYPTPLTPARMVQRYKRFLSDVTLADGTQVTAHCANSGSMRGLVHVGEPVYLSHSDNPKRKLAWTLELVCDGGALVGVNTGLANALVAEALQQDRIPPLQGFAHFRREVPYQDSRLDFCLTAPAGALTYVEVKSVTLRLTDEAAFPDAVTKRGAKHLAALRHAVKAGHRGVILFIVQRSDLDHFRPAHEIDPGYAQTLQWAISEGVEILVYACALTTASIYVERPLSYTLG</sequence>
<evidence type="ECO:0000255" key="1">
    <source>
        <dbReference type="HAMAP-Rule" id="MF_00095"/>
    </source>
</evidence>
<feature type="chain" id="PRO_1000007994" description="Sugar fermentation stimulation protein homolog">
    <location>
        <begin position="1"/>
        <end position="232"/>
    </location>
</feature>
<dbReference type="EMBL" id="CP000471">
    <property type="protein sequence ID" value="ABK45512.1"/>
    <property type="molecule type" value="Genomic_DNA"/>
</dbReference>
<dbReference type="RefSeq" id="WP_011714576.1">
    <property type="nucleotide sequence ID" value="NC_008576.1"/>
</dbReference>
<dbReference type="SMR" id="A0LC19"/>
<dbReference type="STRING" id="156889.Mmc1_3021"/>
<dbReference type="KEGG" id="mgm:Mmc1_3021"/>
<dbReference type="eggNOG" id="COG1489">
    <property type="taxonomic scope" value="Bacteria"/>
</dbReference>
<dbReference type="HOGENOM" id="CLU_052299_2_0_5"/>
<dbReference type="OrthoDB" id="9802365at2"/>
<dbReference type="Proteomes" id="UP000002586">
    <property type="component" value="Chromosome"/>
</dbReference>
<dbReference type="GO" id="GO:0003677">
    <property type="term" value="F:DNA binding"/>
    <property type="evidence" value="ECO:0007669"/>
    <property type="project" value="InterPro"/>
</dbReference>
<dbReference type="CDD" id="cd22359">
    <property type="entry name" value="SfsA-like_bacterial"/>
    <property type="match status" value="1"/>
</dbReference>
<dbReference type="Gene3D" id="2.40.50.580">
    <property type="match status" value="1"/>
</dbReference>
<dbReference type="Gene3D" id="3.40.1350.60">
    <property type="match status" value="1"/>
</dbReference>
<dbReference type="HAMAP" id="MF_00095">
    <property type="entry name" value="SfsA"/>
    <property type="match status" value="1"/>
</dbReference>
<dbReference type="InterPro" id="IPR005224">
    <property type="entry name" value="SfsA"/>
</dbReference>
<dbReference type="InterPro" id="IPR040452">
    <property type="entry name" value="SfsA_C"/>
</dbReference>
<dbReference type="InterPro" id="IPR041465">
    <property type="entry name" value="SfsA_N"/>
</dbReference>
<dbReference type="NCBIfam" id="TIGR00230">
    <property type="entry name" value="sfsA"/>
    <property type="match status" value="1"/>
</dbReference>
<dbReference type="PANTHER" id="PTHR30545">
    <property type="entry name" value="SUGAR FERMENTATION STIMULATION PROTEIN A"/>
    <property type="match status" value="1"/>
</dbReference>
<dbReference type="PANTHER" id="PTHR30545:SF2">
    <property type="entry name" value="SUGAR FERMENTATION STIMULATION PROTEIN A"/>
    <property type="match status" value="1"/>
</dbReference>
<dbReference type="Pfam" id="PF03749">
    <property type="entry name" value="SfsA"/>
    <property type="match status" value="1"/>
</dbReference>
<dbReference type="Pfam" id="PF17746">
    <property type="entry name" value="SfsA_N"/>
    <property type="match status" value="1"/>
</dbReference>
<keyword id="KW-1185">Reference proteome</keyword>
<gene>
    <name evidence="1" type="primary">sfsA</name>
    <name type="ordered locus">Mmc1_3021</name>
</gene>
<accession>A0LC19</accession>
<proteinExistence type="inferred from homology"/>
<reference key="1">
    <citation type="journal article" date="2009" name="Appl. Environ. Microbiol.">
        <title>Complete genome sequence of the chemolithoautotrophic marine magnetotactic coccus strain MC-1.</title>
        <authorList>
            <person name="Schubbe S."/>
            <person name="Williams T.J."/>
            <person name="Xie G."/>
            <person name="Kiss H.E."/>
            <person name="Brettin T.S."/>
            <person name="Martinez D."/>
            <person name="Ross C.A."/>
            <person name="Schuler D."/>
            <person name="Cox B.L."/>
            <person name="Nealson K.H."/>
            <person name="Bazylinski D.A."/>
        </authorList>
    </citation>
    <scope>NUCLEOTIDE SEQUENCE [LARGE SCALE GENOMIC DNA]</scope>
    <source>
        <strain>ATCC BAA-1437 / JCM 17883 / MC-1</strain>
    </source>
</reference>
<comment type="similarity">
    <text evidence="1">Belongs to the SfsA family.</text>
</comment>
<organism>
    <name type="scientific">Magnetococcus marinus (strain ATCC BAA-1437 / JCM 17883 / MC-1)</name>
    <dbReference type="NCBI Taxonomy" id="156889"/>
    <lineage>
        <taxon>Bacteria</taxon>
        <taxon>Pseudomonadati</taxon>
        <taxon>Pseudomonadota</taxon>
        <taxon>Alphaproteobacteria</taxon>
        <taxon>Magnetococcales</taxon>
        <taxon>Magnetococcaceae</taxon>
        <taxon>Magnetococcus</taxon>
    </lineage>
</organism>
<protein>
    <recommendedName>
        <fullName evidence="1">Sugar fermentation stimulation protein homolog</fullName>
    </recommendedName>
</protein>